<evidence type="ECO:0000250" key="1">
    <source>
        <dbReference type="UniProtKB" id="P04853"/>
    </source>
</evidence>
<evidence type="ECO:0000250" key="2">
    <source>
        <dbReference type="UniProtKB" id="Q91UL0"/>
    </source>
</evidence>
<evidence type="ECO:0000250" key="3">
    <source>
        <dbReference type="UniProtKB" id="Q9WAF5"/>
    </source>
</evidence>
<evidence type="ECO:0000255" key="4"/>
<evidence type="ECO:0000305" key="5"/>
<sequence length="616" mass="67680">MDRAVSQVALENDEREAKNTWRLVFRIAILLLTVVTLAISAAALAYSMEASTPSDLVGIPTAISRTEEKITSALGSNQDVVDRIYKQVALESPLALLNTESTIMNAITSLSYQINGAANSSGCGAPIHDPDYIGGIGKELIVDDASDVTSFYPSAFQEHLNFIPAPTTGSGCTRIPSFDMSATHYCYTHNVILSGCRDRSHSHQYLALGVLRTSATGRVFFSTLRSINLDDTQNRKSCSVSATPLGCDMLCSKVTETEEEDYNSAIPTSMVHGRLGFDGQYHEKDLDVTTLFEDWVANYPGVGGGSFIDNRVWFPVYGGLKPNSPSDTAQEGKYVIYKRYNDTCPDEQDYQIRMAKSSYKPGRFGGKRVQQAILSIKVSTSLGEDPVLTVPPNTVTLMGAEGRVLTVGTSHFFYQRGSSYFSPALLYPMTVSNKTATLHSPYTFNAFTRPGSVPCQASARCPNSCVTGVYTDPYPLVFYRNHTLRGVFGTMLDDEQARLNPVSAVFDSISRSRITRVSSSSTKAAYTTSTCFKVVKTNKTYCLSIAEISNTLFGEFRIVPLLVEILKDDGVREARSGRLSQLQEGWKDDIVSPIFCDAKNQTEYRRELESYAASWP</sequence>
<organismHost>
    <name type="scientific">Gallus gallus</name>
    <name type="common">Chicken</name>
    <dbReference type="NCBI Taxonomy" id="9031"/>
</organismHost>
<feature type="chain" id="PRO_0000142609" description="Hemagglutinin-neuraminidase">
    <location>
        <begin position="1"/>
        <end position="616"/>
    </location>
</feature>
<feature type="topological domain" description="Intravirion" evidence="4">
    <location>
        <begin position="1"/>
        <end position="26"/>
    </location>
</feature>
<feature type="transmembrane region" description="Helical" evidence="4">
    <location>
        <begin position="27"/>
        <end position="47"/>
    </location>
</feature>
<feature type="topological domain" description="Virion surface" evidence="4">
    <location>
        <begin position="48"/>
        <end position="616"/>
    </location>
</feature>
<feature type="region of interest" description="Important for interaction with fusion/F protein" evidence="2">
    <location>
        <begin position="124"/>
        <end position="152"/>
    </location>
</feature>
<feature type="region of interest" description="Involved in neuraminidase activity" evidence="2">
    <location>
        <begin position="234"/>
        <end position="239"/>
    </location>
</feature>
<feature type="glycosylation site" description="N-linked (GlcNAc...) asparagine; by host" evidence="4">
    <location>
        <position position="119"/>
    </location>
</feature>
<feature type="glycosylation site" description="N-linked (GlcNAc...) asparagine; by host" evidence="2">
    <location>
        <position position="341"/>
    </location>
</feature>
<feature type="glycosylation site" description="N-linked (GlcNAc...) asparagine; by host" evidence="2">
    <location>
        <position position="433"/>
    </location>
</feature>
<feature type="glycosylation site" description="N-linked (GlcNAc...) asparagine; by host" evidence="2">
    <location>
        <position position="481"/>
    </location>
</feature>
<feature type="glycosylation site" description="N-linked (GlcNAc...) asparagine; by host" evidence="4">
    <location>
        <position position="538"/>
    </location>
</feature>
<feature type="glycosylation site" description="N-linked (GlcNAc...) asparagine; by host" evidence="4">
    <location>
        <position position="600"/>
    </location>
</feature>
<feature type="disulfide bond" evidence="3">
    <location>
        <begin position="172"/>
        <end position="196"/>
    </location>
</feature>
<feature type="disulfide bond" evidence="3">
    <location>
        <begin position="186"/>
        <end position="247"/>
    </location>
</feature>
<feature type="disulfide bond" evidence="3">
    <location>
        <begin position="238"/>
        <end position="251"/>
    </location>
</feature>
<feature type="disulfide bond" evidence="3">
    <location>
        <begin position="344"/>
        <end position="461"/>
    </location>
</feature>
<feature type="disulfide bond" evidence="3">
    <location>
        <begin position="455"/>
        <end position="465"/>
    </location>
</feature>
<feature type="disulfide bond" evidence="3">
    <location>
        <begin position="531"/>
        <end position="542"/>
    </location>
</feature>
<feature type="sequence conflict" description="In Ref. 2; AAA46655." evidence="5" ref="2">
    <original>R</original>
    <variation>H</variation>
    <location>
        <position position="199"/>
    </location>
</feature>
<accession>P12555</accession>
<keyword id="KW-1015">Disulfide bond</keyword>
<keyword id="KW-0325">Glycoprotein</keyword>
<keyword id="KW-0348">Hemagglutinin</keyword>
<keyword id="KW-1032">Host cell membrane</keyword>
<keyword id="KW-1043">Host membrane</keyword>
<keyword id="KW-0945">Host-virus interaction</keyword>
<keyword id="KW-0378">Hydrolase</keyword>
<keyword id="KW-0472">Membrane</keyword>
<keyword id="KW-0735">Signal-anchor</keyword>
<keyword id="KW-0812">Transmembrane</keyword>
<keyword id="KW-1133">Transmembrane helix</keyword>
<keyword id="KW-1161">Viral attachment to host cell</keyword>
<keyword id="KW-0261">Viral envelope protein</keyword>
<keyword id="KW-0946">Virion</keyword>
<keyword id="KW-1160">Virus entry into host cell</keyword>
<protein>
    <recommendedName>
        <fullName>Hemagglutinin-neuraminidase</fullName>
        <ecNumber evidence="3">3.2.1.18</ecNumber>
    </recommendedName>
</protein>
<organism>
    <name type="scientific">Newcastle disease virus (strain D26/76)</name>
    <name type="common">NDV</name>
    <dbReference type="NCBI Taxonomy" id="11180"/>
    <lineage>
        <taxon>Viruses</taxon>
        <taxon>Riboviria</taxon>
        <taxon>Orthornavirae</taxon>
        <taxon>Negarnaviricota</taxon>
        <taxon>Haploviricotina</taxon>
        <taxon>Monjiviricetes</taxon>
        <taxon>Mononegavirales</taxon>
        <taxon>Paramyxoviridae</taxon>
        <taxon>Avulavirinae</taxon>
        <taxon>Orthoavulavirus</taxon>
        <taxon>Orthoavulavirus javaense</taxon>
        <taxon>Avian paramyxovirus 1</taxon>
    </lineage>
</organism>
<proteinExistence type="inferred from homology"/>
<comment type="function">
    <text evidence="2">Mediates the viral entry into the host cell together with fusion/F protein. Attaches the virus to sialic acid-containing cell receptors and thereby initiates infection. Binding of HN protein to the receptor induces a conformational change that allows the F protein to trigger virion/cell membranes fusion.</text>
</comment>
<comment type="function">
    <text evidence="2">Neuraminidase activity ensures the efficient spread of the virus by dissociating the mature virions from the neuraminic acid containing glycoproteins.</text>
</comment>
<comment type="catalytic activity">
    <reaction evidence="2">
        <text>Hydrolysis of alpha-(2-&gt;3)-, alpha-(2-&gt;6)-, alpha-(2-&gt;8)- glycosidic linkages of terminal sialic acid residues in oligosaccharides, glycoproteins, glycolipids, colominic acid and synthetic substrates.</text>
        <dbReference type="EC" id="3.2.1.18"/>
    </reaction>
</comment>
<comment type="subunit">
    <text evidence="1 2 3">Homotetramer; composed of disulfide-linked homodimers (By similarity). Interacts with F protein trimer (By similarity). Interacts with host CG-1B; this interaction inhibits viral adsorption and replication rather than internalization (By similarity).</text>
</comment>
<comment type="subcellular location">
    <subcellularLocation>
        <location evidence="2">Virion membrane</location>
        <topology evidence="2">Single-pass type II membrane protein</topology>
    </subcellularLocation>
    <subcellularLocation>
        <location evidence="2">Host cell membrane</location>
        <topology evidence="2">Single-pass type II membrane protein</topology>
    </subcellularLocation>
</comment>
<comment type="domain">
    <text evidence="3">The C-terminus (head domain) is involved in binding the cellular receptor.</text>
</comment>
<comment type="similarity">
    <text evidence="5">Belongs to the paramyxoviruses hemagglutinin-neuraminidase family.</text>
</comment>
<gene>
    <name type="primary">HN</name>
</gene>
<dbReference type="EC" id="3.2.1.18" evidence="3"/>
<dbReference type="EMBL" id="M19432">
    <property type="protein sequence ID" value="AAA46638.1"/>
    <property type="molecule type" value="Genomic_RNA"/>
</dbReference>
<dbReference type="EMBL" id="M24705">
    <property type="protein sequence ID" value="AAA46655.1"/>
    <property type="molecule type" value="Genomic_RNA"/>
</dbReference>
<dbReference type="PIR" id="A46328">
    <property type="entry name" value="A46328"/>
</dbReference>
<dbReference type="SMR" id="P12555"/>
<dbReference type="CAZy" id="GH83">
    <property type="family name" value="Glycoside Hydrolase Family 83"/>
</dbReference>
<dbReference type="GlyCosmos" id="P12555">
    <property type="glycosylation" value="6 sites, No reported glycans"/>
</dbReference>
<dbReference type="GO" id="GO:0020002">
    <property type="term" value="C:host cell plasma membrane"/>
    <property type="evidence" value="ECO:0007669"/>
    <property type="project" value="UniProtKB-SubCell"/>
</dbReference>
<dbReference type="GO" id="GO:0016020">
    <property type="term" value="C:membrane"/>
    <property type="evidence" value="ECO:0007669"/>
    <property type="project" value="UniProtKB-KW"/>
</dbReference>
<dbReference type="GO" id="GO:0019031">
    <property type="term" value="C:viral envelope"/>
    <property type="evidence" value="ECO:0007669"/>
    <property type="project" value="UniProtKB-KW"/>
</dbReference>
<dbReference type="GO" id="GO:0055036">
    <property type="term" value="C:virion membrane"/>
    <property type="evidence" value="ECO:0007669"/>
    <property type="project" value="UniProtKB-SubCell"/>
</dbReference>
<dbReference type="GO" id="GO:0004308">
    <property type="term" value="F:exo-alpha-sialidase activity"/>
    <property type="evidence" value="ECO:0007669"/>
    <property type="project" value="UniProtKB-EC"/>
</dbReference>
<dbReference type="GO" id="GO:0046789">
    <property type="term" value="F:host cell surface receptor binding"/>
    <property type="evidence" value="ECO:0007669"/>
    <property type="project" value="InterPro"/>
</dbReference>
<dbReference type="GO" id="GO:0046718">
    <property type="term" value="P:symbiont entry into host cell"/>
    <property type="evidence" value="ECO:0007669"/>
    <property type="project" value="UniProtKB-KW"/>
</dbReference>
<dbReference type="GO" id="GO:0019062">
    <property type="term" value="P:virion attachment to host cell"/>
    <property type="evidence" value="ECO:0007669"/>
    <property type="project" value="UniProtKB-KW"/>
</dbReference>
<dbReference type="CDD" id="cd15469">
    <property type="entry name" value="HN"/>
    <property type="match status" value="1"/>
</dbReference>
<dbReference type="FunFam" id="2.120.10.10:FF:000004">
    <property type="entry name" value="Hemagglutinin-neuraminidase"/>
    <property type="match status" value="1"/>
</dbReference>
<dbReference type="Gene3D" id="2.120.10.10">
    <property type="match status" value="1"/>
</dbReference>
<dbReference type="InterPro" id="IPR016285">
    <property type="entry name" value="Hemagglutn-neuramid"/>
</dbReference>
<dbReference type="InterPro" id="IPR000665">
    <property type="entry name" value="Hemagglutn/HN"/>
</dbReference>
<dbReference type="InterPro" id="IPR036278">
    <property type="entry name" value="Sialidase_sf"/>
</dbReference>
<dbReference type="Pfam" id="PF00423">
    <property type="entry name" value="HN"/>
    <property type="match status" value="1"/>
</dbReference>
<dbReference type="PIRSF" id="PIRSF001072">
    <property type="entry name" value="Hemagglut-neuramid_paramyxoV"/>
    <property type="match status" value="1"/>
</dbReference>
<dbReference type="SUPFAM" id="SSF50939">
    <property type="entry name" value="Sialidases"/>
    <property type="match status" value="1"/>
</dbReference>
<reference key="1">
    <citation type="journal article" date="1988" name="Virology">
        <title>Structural features unique to each of the three antigenic sites on the hemagglutinin-neuraminidase protein of Newcastle disease virus.</title>
        <authorList>
            <person name="Gotoh B."/>
            <person name="Sakaguchi T."/>
            <person name="Nishikawa K."/>
            <person name="Inocencio N.M."/>
            <person name="Hamaguchi M."/>
            <person name="Toyoda T."/>
            <person name="Nagai Y."/>
        </authorList>
    </citation>
    <scope>NUCLEOTIDE SEQUENCE [GENOMIC RNA]</scope>
</reference>
<reference key="2">
    <citation type="journal article" date="1989" name="Virology">
        <title>Newcastle disease virus evolution. I. Multiple lineages defined by sequence variability of the hemagglutinin-neuraminidase gene.</title>
        <authorList>
            <person name="Sakaguchi T."/>
            <person name="Toyoda T."/>
            <person name="Gotoh B."/>
            <person name="Inocencio N.M."/>
            <person name="Kuma K."/>
            <person name="Miyata T."/>
            <person name="Nagai Y."/>
        </authorList>
    </citation>
    <scope>NUCLEOTIDE SEQUENCE [GENOMIC RNA]</scope>
</reference>
<name>HN_NDVD</name>